<protein>
    <recommendedName>
        <fullName evidence="1">Small ribosomal subunit protein uS8</fullName>
    </recommendedName>
    <alternativeName>
        <fullName evidence="2">30S ribosomal protein S8</fullName>
    </alternativeName>
</protein>
<dbReference type="EMBL" id="CP001219">
    <property type="protein sequence ID" value="ACK78998.1"/>
    <property type="molecule type" value="Genomic_DNA"/>
</dbReference>
<dbReference type="RefSeq" id="WP_009568793.1">
    <property type="nucleotide sequence ID" value="NC_011761.1"/>
</dbReference>
<dbReference type="SMR" id="B7J481"/>
<dbReference type="STRING" id="243159.AFE_0341"/>
<dbReference type="PaxDb" id="243159-AFE_0341"/>
<dbReference type="GeneID" id="65279719"/>
<dbReference type="KEGG" id="afr:AFE_0341"/>
<dbReference type="eggNOG" id="COG0096">
    <property type="taxonomic scope" value="Bacteria"/>
</dbReference>
<dbReference type="HOGENOM" id="CLU_098428_0_0_6"/>
<dbReference type="Proteomes" id="UP000001362">
    <property type="component" value="Chromosome"/>
</dbReference>
<dbReference type="GO" id="GO:1990904">
    <property type="term" value="C:ribonucleoprotein complex"/>
    <property type="evidence" value="ECO:0007669"/>
    <property type="project" value="UniProtKB-KW"/>
</dbReference>
<dbReference type="GO" id="GO:0005840">
    <property type="term" value="C:ribosome"/>
    <property type="evidence" value="ECO:0007669"/>
    <property type="project" value="UniProtKB-KW"/>
</dbReference>
<dbReference type="GO" id="GO:0019843">
    <property type="term" value="F:rRNA binding"/>
    <property type="evidence" value="ECO:0007669"/>
    <property type="project" value="UniProtKB-UniRule"/>
</dbReference>
<dbReference type="GO" id="GO:0003735">
    <property type="term" value="F:structural constituent of ribosome"/>
    <property type="evidence" value="ECO:0007669"/>
    <property type="project" value="InterPro"/>
</dbReference>
<dbReference type="GO" id="GO:0006412">
    <property type="term" value="P:translation"/>
    <property type="evidence" value="ECO:0007669"/>
    <property type="project" value="UniProtKB-UniRule"/>
</dbReference>
<dbReference type="FunFam" id="3.30.1370.30:FF:000002">
    <property type="entry name" value="30S ribosomal protein S8"/>
    <property type="match status" value="1"/>
</dbReference>
<dbReference type="FunFam" id="3.30.1490.10:FF:000001">
    <property type="entry name" value="30S ribosomal protein S8"/>
    <property type="match status" value="1"/>
</dbReference>
<dbReference type="Gene3D" id="3.30.1370.30">
    <property type="match status" value="1"/>
</dbReference>
<dbReference type="Gene3D" id="3.30.1490.10">
    <property type="match status" value="1"/>
</dbReference>
<dbReference type="HAMAP" id="MF_01302_B">
    <property type="entry name" value="Ribosomal_uS8_B"/>
    <property type="match status" value="1"/>
</dbReference>
<dbReference type="InterPro" id="IPR000630">
    <property type="entry name" value="Ribosomal_uS8"/>
</dbReference>
<dbReference type="InterPro" id="IPR047863">
    <property type="entry name" value="Ribosomal_uS8_CS"/>
</dbReference>
<dbReference type="InterPro" id="IPR035987">
    <property type="entry name" value="Ribosomal_uS8_sf"/>
</dbReference>
<dbReference type="NCBIfam" id="NF001109">
    <property type="entry name" value="PRK00136.1"/>
    <property type="match status" value="1"/>
</dbReference>
<dbReference type="PANTHER" id="PTHR11758">
    <property type="entry name" value="40S RIBOSOMAL PROTEIN S15A"/>
    <property type="match status" value="1"/>
</dbReference>
<dbReference type="Pfam" id="PF00410">
    <property type="entry name" value="Ribosomal_S8"/>
    <property type="match status" value="1"/>
</dbReference>
<dbReference type="SUPFAM" id="SSF56047">
    <property type="entry name" value="Ribosomal protein S8"/>
    <property type="match status" value="1"/>
</dbReference>
<dbReference type="PROSITE" id="PS00053">
    <property type="entry name" value="RIBOSOMAL_S8"/>
    <property type="match status" value="1"/>
</dbReference>
<name>RS8_ACIF2</name>
<gene>
    <name evidence="1" type="primary">rpsH</name>
    <name type="ordered locus">AFE_0341</name>
</gene>
<reference key="1">
    <citation type="journal article" date="2008" name="BMC Genomics">
        <title>Acidithiobacillus ferrooxidans metabolism: from genome sequence to industrial applications.</title>
        <authorList>
            <person name="Valdes J."/>
            <person name="Pedroso I."/>
            <person name="Quatrini R."/>
            <person name="Dodson R.J."/>
            <person name="Tettelin H."/>
            <person name="Blake R. II"/>
            <person name="Eisen J.A."/>
            <person name="Holmes D.S."/>
        </authorList>
    </citation>
    <scope>NUCLEOTIDE SEQUENCE [LARGE SCALE GENOMIC DNA]</scope>
    <source>
        <strain>ATCC 23270 / DSM 14882 / CIP 104768 / NCIMB 8455</strain>
    </source>
</reference>
<organism>
    <name type="scientific">Acidithiobacillus ferrooxidans (strain ATCC 23270 / DSM 14882 / CIP 104768 / NCIMB 8455)</name>
    <name type="common">Ferrobacillus ferrooxidans (strain ATCC 23270)</name>
    <dbReference type="NCBI Taxonomy" id="243159"/>
    <lineage>
        <taxon>Bacteria</taxon>
        <taxon>Pseudomonadati</taxon>
        <taxon>Pseudomonadota</taxon>
        <taxon>Acidithiobacillia</taxon>
        <taxon>Acidithiobacillales</taxon>
        <taxon>Acidithiobacillaceae</taxon>
        <taxon>Acidithiobacillus</taxon>
    </lineage>
</organism>
<keyword id="KW-1185">Reference proteome</keyword>
<keyword id="KW-0687">Ribonucleoprotein</keyword>
<keyword id="KW-0689">Ribosomal protein</keyword>
<keyword id="KW-0694">RNA-binding</keyword>
<keyword id="KW-0699">rRNA-binding</keyword>
<evidence type="ECO:0000255" key="1">
    <source>
        <dbReference type="HAMAP-Rule" id="MF_01302"/>
    </source>
</evidence>
<evidence type="ECO:0000305" key="2"/>
<accession>B7J481</accession>
<comment type="function">
    <text evidence="1">One of the primary rRNA binding proteins, it binds directly to 16S rRNA central domain where it helps coordinate assembly of the platform of the 30S subunit.</text>
</comment>
<comment type="subunit">
    <text evidence="1">Part of the 30S ribosomal subunit. Contacts proteins S5 and S12.</text>
</comment>
<comment type="similarity">
    <text evidence="1">Belongs to the universal ribosomal protein uS8 family.</text>
</comment>
<sequence length="131" mass="14190">MSVTDPIADMLTRIRNAQQVNKAKVRMPASKLKRAIARVLVEEGYIQEVKEDVANGHPVLDLTLKYYAGAGVIAEIRRVSRPGVRVYRGAEDLPRVRDGFGIAIISTSQGIMTDRAARSAGIGGEVLCVVS</sequence>
<feature type="chain" id="PRO_1000140499" description="Small ribosomal subunit protein uS8">
    <location>
        <begin position="1"/>
        <end position="131"/>
    </location>
</feature>
<proteinExistence type="inferred from homology"/>